<feature type="chain" id="PRO_0000363536" description="Pentatricopeptide repeat-containing protein At5g27270">
    <location>
        <begin position="1"/>
        <end position="1038"/>
    </location>
</feature>
<feature type="repeat" description="PPR 1">
    <location>
        <begin position="187"/>
        <end position="221"/>
    </location>
</feature>
<feature type="repeat" description="PPR 2">
    <location>
        <begin position="222"/>
        <end position="256"/>
    </location>
</feature>
<feature type="repeat" description="PPR 3">
    <location>
        <begin position="257"/>
        <end position="291"/>
    </location>
</feature>
<feature type="repeat" description="PPR 4">
    <location>
        <begin position="292"/>
        <end position="326"/>
    </location>
</feature>
<feature type="repeat" description="PPR 5">
    <location>
        <begin position="327"/>
        <end position="361"/>
    </location>
</feature>
<feature type="repeat" description="PPR 6">
    <location>
        <begin position="362"/>
        <end position="396"/>
    </location>
</feature>
<feature type="repeat" description="PPR 7">
    <location>
        <begin position="397"/>
        <end position="431"/>
    </location>
</feature>
<feature type="repeat" description="PPR 8">
    <location>
        <begin position="432"/>
        <end position="466"/>
    </location>
</feature>
<feature type="repeat" description="PPR 9">
    <location>
        <begin position="467"/>
        <end position="501"/>
    </location>
</feature>
<feature type="repeat" description="PPR 10">
    <location>
        <begin position="502"/>
        <end position="535"/>
    </location>
</feature>
<feature type="repeat" description="PPR 11">
    <location>
        <begin position="536"/>
        <end position="570"/>
    </location>
</feature>
<feature type="repeat" description="PPR 12">
    <location>
        <begin position="601"/>
        <end position="631"/>
    </location>
</feature>
<feature type="repeat" description="PPR 13">
    <location>
        <begin position="634"/>
        <end position="668"/>
    </location>
</feature>
<feature type="repeat" description="PPR 14">
    <location>
        <begin position="669"/>
        <end position="699"/>
    </location>
</feature>
<feature type="repeat" description="PPR 15">
    <location>
        <begin position="703"/>
        <end position="737"/>
    </location>
</feature>
<feature type="repeat" description="PPR 16">
    <location>
        <begin position="738"/>
        <end position="772"/>
    </location>
</feature>
<feature type="repeat" description="PPR 17">
    <location>
        <begin position="773"/>
        <end position="807"/>
    </location>
</feature>
<feature type="repeat" description="PPR 18">
    <location>
        <begin position="808"/>
        <end position="842"/>
    </location>
</feature>
<feature type="repeat" description="PPR 19">
    <location>
        <begin position="843"/>
        <end position="877"/>
    </location>
</feature>
<feature type="repeat" description="PPR 20">
    <location>
        <begin position="878"/>
        <end position="912"/>
    </location>
</feature>
<feature type="repeat" description="PPR 21">
    <location>
        <begin position="913"/>
        <end position="947"/>
    </location>
</feature>
<feature type="repeat" description="PPR 22">
    <location>
        <begin position="948"/>
        <end position="982"/>
    </location>
</feature>
<feature type="repeat" description="PPR 23">
    <location>
        <begin position="983"/>
        <end position="1017"/>
    </location>
</feature>
<feature type="region of interest" description="Disordered" evidence="1">
    <location>
        <begin position="23"/>
        <end position="69"/>
    </location>
</feature>
<feature type="compositionally biased region" description="Low complexity" evidence="1">
    <location>
        <begin position="23"/>
        <end position="38"/>
    </location>
</feature>
<feature type="compositionally biased region" description="Basic and acidic residues" evidence="1">
    <location>
        <begin position="50"/>
        <end position="69"/>
    </location>
</feature>
<comment type="similarity">
    <text evidence="2">Belongs to the PPR family. P subfamily.</text>
</comment>
<comment type="sequence caution" evidence="2">
    <conflict type="erroneous gene model prediction">
        <sequence resource="EMBL-CDS" id="AAB61077"/>
    </conflict>
</comment>
<comment type="online information" name="Pentatricopeptide repeat proteins">
    <link uri="https://ppr.plantenergy.uwa.edu.au"/>
</comment>
<sequence>MKSDFLTSTTHFNPSIFLPKIPSRNSRISIKSSSSSSKVRPDPWSLSDGNPEKPKPRYERPKHPLSDDDARRIIKKKAQYLSTLRRNQGSQAMTPKWIKRTPEQMVQYLEDDRNGQMYGKHVVAAIKTVRGLSQRRQGSDDMRFVMSSFVAKLSFRDMCVVLKEQRGWRQVRDFFSWMKLQLSYRPSVVVYTIVLRLYGQVGKIKMAEETFLEMLEVGCEPDAVACGTMLCTYARWGRHSAMLTFYKAVQERRILLSTSVYNFMLSSLQKKSFHGKVIDLWLEMVEEGVPPNEFTYTLVVSSYAKQGFKEEALKAFGEMKSLGFVPEEVTYSSVISLSVKAGDWEKAIGLYEDMRSQGIVPSNYTCATMLSLYYKTENYPKALSLFADMERNKIPADEVIRGLIIRIYGKLGLFHDAQSMFEETERLNLLADEKTYLAMSQVHLNSGNVVKALDVIEMMKTRDIPLSRFAYIVMLQCYAKIQNVDCAEEAFRALSKTGLPDASSCNDMLNLYTRLNLGEKAKGFIKQIMVDQVHFDIELYKTAMRVYCKEGMVAEAQDLIVKMGREARVKDNRFVQTLAESMHIVNKHDKHEAVLNVSQLDVMALGLMLNLRLKEGNLNETKAILNLMFKTDLGSSAVNRVISSFVREGDVSKAEMIADIIIRLGLRMEEETIATLIAVYGRQHKLKEAKRLYLAAGESKTPGKSVIRSMIDAYVRCGWLEDAYGLFMESAEKGCDPGAVTISILVNALTNRGKHREAEHISRTCLEKNIELDTVGYNTLIKAMLEAGKLQCASEIYERMHTSGVPCSIQTYNTMISVYGRGLQLDKAIEIFSNARRSGLYLDEKIYTNMIMHYGKGGKMSEALSLFSEMQKKGIKPGTPSYNMMVKICATSRLHHEVDELLQAMERNGRCTDLSTYLTLIQVYAESSQFAEAEKTITLVKEKGIPLSHSHFSSLLSALVKAGMMEEAERTYCKMSEAGISPDSACKRTILKGYMTCGDAEKGILFYEKMIRSSVEDDRFVSSVVEDLYKAVGKEQDV</sequence>
<proteinExistence type="evidence at transcript level"/>
<dbReference type="EMBL" id="AC007123">
    <property type="status" value="NOT_ANNOTATED_CDS"/>
    <property type="molecule type" value="Genomic_DNA"/>
</dbReference>
<dbReference type="EMBL" id="AF007271">
    <property type="protein sequence ID" value="AAB61077.1"/>
    <property type="status" value="ALT_SEQ"/>
    <property type="molecule type" value="Genomic_DNA"/>
</dbReference>
<dbReference type="EMBL" id="CP002688">
    <property type="protein sequence ID" value="AED93665.1"/>
    <property type="molecule type" value="Genomic_DNA"/>
</dbReference>
<dbReference type="PIR" id="T01796">
    <property type="entry name" value="T01796"/>
</dbReference>
<dbReference type="RefSeq" id="NP_198079.1">
    <property type="nucleotide sequence ID" value="NM_122609.3"/>
</dbReference>
<dbReference type="SMR" id="O04647"/>
<dbReference type="FunCoup" id="O04647">
    <property type="interactions" value="1686"/>
</dbReference>
<dbReference type="STRING" id="3702.O04647"/>
<dbReference type="PaxDb" id="3702-AT5G27270.1"/>
<dbReference type="ProteomicsDB" id="249280"/>
<dbReference type="EnsemblPlants" id="AT5G27270.1">
    <property type="protein sequence ID" value="AT5G27270.1"/>
    <property type="gene ID" value="AT5G27270"/>
</dbReference>
<dbReference type="GeneID" id="832785"/>
<dbReference type="Gramene" id="AT5G27270.1">
    <property type="protein sequence ID" value="AT5G27270.1"/>
    <property type="gene ID" value="AT5G27270"/>
</dbReference>
<dbReference type="KEGG" id="ath:AT5G27270"/>
<dbReference type="Araport" id="AT5G27270"/>
<dbReference type="TAIR" id="AT5G27270">
    <property type="gene designation" value="EMB976"/>
</dbReference>
<dbReference type="eggNOG" id="KOG4197">
    <property type="taxonomic scope" value="Eukaryota"/>
</dbReference>
<dbReference type="HOGENOM" id="CLU_002706_49_4_1"/>
<dbReference type="InParanoid" id="O04647"/>
<dbReference type="PhylomeDB" id="O04647"/>
<dbReference type="PRO" id="PR:O04647"/>
<dbReference type="Proteomes" id="UP000006548">
    <property type="component" value="Chromosome 5"/>
</dbReference>
<dbReference type="ExpressionAtlas" id="O04647">
    <property type="expression patterns" value="baseline and differential"/>
</dbReference>
<dbReference type="GO" id="GO:0009570">
    <property type="term" value="C:chloroplast stroma"/>
    <property type="evidence" value="ECO:0000314"/>
    <property type="project" value="TAIR"/>
</dbReference>
<dbReference type="GO" id="GO:0003729">
    <property type="term" value="F:mRNA binding"/>
    <property type="evidence" value="ECO:0000314"/>
    <property type="project" value="TAIR"/>
</dbReference>
<dbReference type="GO" id="GO:0010239">
    <property type="term" value="P:chloroplast mRNA processing"/>
    <property type="evidence" value="ECO:0000315"/>
    <property type="project" value="TAIR"/>
</dbReference>
<dbReference type="GO" id="GO:0000373">
    <property type="term" value="P:Group II intron splicing"/>
    <property type="evidence" value="ECO:0000315"/>
    <property type="project" value="TAIR"/>
</dbReference>
<dbReference type="Gene3D" id="1.25.40.10">
    <property type="entry name" value="Tetratricopeptide repeat domain"/>
    <property type="match status" value="7"/>
</dbReference>
<dbReference type="InterPro" id="IPR002885">
    <property type="entry name" value="Pentatricopeptide_rpt"/>
</dbReference>
<dbReference type="InterPro" id="IPR011990">
    <property type="entry name" value="TPR-like_helical_dom_sf"/>
</dbReference>
<dbReference type="NCBIfam" id="TIGR00756">
    <property type="entry name" value="PPR"/>
    <property type="match status" value="9"/>
</dbReference>
<dbReference type="PANTHER" id="PTHR47447">
    <property type="entry name" value="OS03G0856100 PROTEIN"/>
    <property type="match status" value="1"/>
</dbReference>
<dbReference type="PANTHER" id="PTHR47447:SF24">
    <property type="entry name" value="PENTATRICOPEPTIDE REPEAT-CONTAINING PROTEIN"/>
    <property type="match status" value="1"/>
</dbReference>
<dbReference type="Pfam" id="PF01535">
    <property type="entry name" value="PPR"/>
    <property type="match status" value="6"/>
</dbReference>
<dbReference type="Pfam" id="PF13041">
    <property type="entry name" value="PPR_2"/>
    <property type="match status" value="4"/>
</dbReference>
<dbReference type="Pfam" id="PF13812">
    <property type="entry name" value="PPR_3"/>
    <property type="match status" value="1"/>
</dbReference>
<dbReference type="SUPFAM" id="SSF81901">
    <property type="entry name" value="HCP-like"/>
    <property type="match status" value="1"/>
</dbReference>
<dbReference type="SUPFAM" id="SSF48452">
    <property type="entry name" value="TPR-like"/>
    <property type="match status" value="1"/>
</dbReference>
<dbReference type="PROSITE" id="PS51375">
    <property type="entry name" value="PPR"/>
    <property type="match status" value="22"/>
</dbReference>
<organism>
    <name type="scientific">Arabidopsis thaliana</name>
    <name type="common">Mouse-ear cress</name>
    <dbReference type="NCBI Taxonomy" id="3702"/>
    <lineage>
        <taxon>Eukaryota</taxon>
        <taxon>Viridiplantae</taxon>
        <taxon>Streptophyta</taxon>
        <taxon>Embryophyta</taxon>
        <taxon>Tracheophyta</taxon>
        <taxon>Spermatophyta</taxon>
        <taxon>Magnoliopsida</taxon>
        <taxon>eudicotyledons</taxon>
        <taxon>Gunneridae</taxon>
        <taxon>Pentapetalae</taxon>
        <taxon>rosids</taxon>
        <taxon>malvids</taxon>
        <taxon>Brassicales</taxon>
        <taxon>Brassicaceae</taxon>
        <taxon>Camelineae</taxon>
        <taxon>Arabidopsis</taxon>
    </lineage>
</organism>
<accession>O04647</accession>
<keyword id="KW-1185">Reference proteome</keyword>
<keyword id="KW-0677">Repeat</keyword>
<name>PP399_ARATH</name>
<protein>
    <recommendedName>
        <fullName>Pentatricopeptide repeat-containing protein At5g27270</fullName>
    </recommendedName>
    <alternativeName>
        <fullName>Protein EMBRYO DEFECTIVE 976</fullName>
    </alternativeName>
</protein>
<reference key="1">
    <citation type="journal article" date="2000" name="Nature">
        <title>Sequence and analysis of chromosome 5 of the plant Arabidopsis thaliana.</title>
        <authorList>
            <person name="Tabata S."/>
            <person name="Kaneko T."/>
            <person name="Nakamura Y."/>
            <person name="Kotani H."/>
            <person name="Kato T."/>
            <person name="Asamizu E."/>
            <person name="Miyajima N."/>
            <person name="Sasamoto S."/>
            <person name="Kimura T."/>
            <person name="Hosouchi T."/>
            <person name="Kawashima K."/>
            <person name="Kohara M."/>
            <person name="Matsumoto M."/>
            <person name="Matsuno A."/>
            <person name="Muraki A."/>
            <person name="Nakayama S."/>
            <person name="Nakazaki N."/>
            <person name="Naruo K."/>
            <person name="Okumura S."/>
            <person name="Shinpo S."/>
            <person name="Takeuchi C."/>
            <person name="Wada T."/>
            <person name="Watanabe A."/>
            <person name="Yamada M."/>
            <person name="Yasuda M."/>
            <person name="Sato S."/>
            <person name="de la Bastide M."/>
            <person name="Huang E."/>
            <person name="Spiegel L."/>
            <person name="Gnoj L."/>
            <person name="O'Shaughnessy A."/>
            <person name="Preston R."/>
            <person name="Habermann K."/>
            <person name="Murray J."/>
            <person name="Johnson D."/>
            <person name="Rohlfing T."/>
            <person name="Nelson J."/>
            <person name="Stoneking T."/>
            <person name="Pepin K."/>
            <person name="Spieth J."/>
            <person name="Sekhon M."/>
            <person name="Armstrong J."/>
            <person name="Becker M."/>
            <person name="Belter E."/>
            <person name="Cordum H."/>
            <person name="Cordes M."/>
            <person name="Courtney L."/>
            <person name="Courtney W."/>
            <person name="Dante M."/>
            <person name="Du H."/>
            <person name="Edwards J."/>
            <person name="Fryman J."/>
            <person name="Haakensen B."/>
            <person name="Lamar E."/>
            <person name="Latreille P."/>
            <person name="Leonard S."/>
            <person name="Meyer R."/>
            <person name="Mulvaney E."/>
            <person name="Ozersky P."/>
            <person name="Riley A."/>
            <person name="Strowmatt C."/>
            <person name="Wagner-McPherson C."/>
            <person name="Wollam A."/>
            <person name="Yoakum M."/>
            <person name="Bell M."/>
            <person name="Dedhia N."/>
            <person name="Parnell L."/>
            <person name="Shah R."/>
            <person name="Rodriguez M."/>
            <person name="Hoon See L."/>
            <person name="Vil D."/>
            <person name="Baker J."/>
            <person name="Kirchoff K."/>
            <person name="Toth K."/>
            <person name="King L."/>
            <person name="Bahret A."/>
            <person name="Miller B."/>
            <person name="Marra M.A."/>
            <person name="Martienssen R."/>
            <person name="McCombie W.R."/>
            <person name="Wilson R.K."/>
            <person name="Murphy G."/>
            <person name="Bancroft I."/>
            <person name="Volckaert G."/>
            <person name="Wambutt R."/>
            <person name="Duesterhoeft A."/>
            <person name="Stiekema W."/>
            <person name="Pohl T."/>
            <person name="Entian K.-D."/>
            <person name="Terryn N."/>
            <person name="Hartley N."/>
            <person name="Bent E."/>
            <person name="Johnson S."/>
            <person name="Langham S.-A."/>
            <person name="McCullagh B."/>
            <person name="Robben J."/>
            <person name="Grymonprez B."/>
            <person name="Zimmermann W."/>
            <person name="Ramsperger U."/>
            <person name="Wedler H."/>
            <person name="Balke K."/>
            <person name="Wedler E."/>
            <person name="Peters S."/>
            <person name="van Staveren M."/>
            <person name="Dirkse W."/>
            <person name="Mooijman P."/>
            <person name="Klein Lankhorst R."/>
            <person name="Weitzenegger T."/>
            <person name="Bothe G."/>
            <person name="Rose M."/>
            <person name="Hauf J."/>
            <person name="Berneiser S."/>
            <person name="Hempel S."/>
            <person name="Feldpausch M."/>
            <person name="Lamberth S."/>
            <person name="Villarroel R."/>
            <person name="Gielen J."/>
            <person name="Ardiles W."/>
            <person name="Bents O."/>
            <person name="Lemcke K."/>
            <person name="Kolesov G."/>
            <person name="Mayer K.F.X."/>
            <person name="Rudd S."/>
            <person name="Schoof H."/>
            <person name="Schueller C."/>
            <person name="Zaccaria P."/>
            <person name="Mewes H.-W."/>
            <person name="Bevan M."/>
            <person name="Fransz P.F."/>
        </authorList>
    </citation>
    <scope>NUCLEOTIDE SEQUENCE [LARGE SCALE GENOMIC DNA]</scope>
    <source>
        <strain>cv. Columbia</strain>
    </source>
</reference>
<reference key="2">
    <citation type="journal article" date="2017" name="Plant J.">
        <title>Araport11: a complete reannotation of the Arabidopsis thaliana reference genome.</title>
        <authorList>
            <person name="Cheng C.Y."/>
            <person name="Krishnakumar V."/>
            <person name="Chan A.P."/>
            <person name="Thibaud-Nissen F."/>
            <person name="Schobel S."/>
            <person name="Town C.D."/>
        </authorList>
    </citation>
    <scope>GENOME REANNOTATION</scope>
    <source>
        <strain>cv. Columbia</strain>
    </source>
</reference>
<reference key="3">
    <citation type="journal article" date="2004" name="Plant Cell">
        <title>Genome-wide analysis of Arabidopsis pentatricopeptide repeat proteins reveals their essential role in organelle biogenesis.</title>
        <authorList>
            <person name="Lurin C."/>
            <person name="Andres C."/>
            <person name="Aubourg S."/>
            <person name="Bellaoui M."/>
            <person name="Bitton F."/>
            <person name="Bruyere C."/>
            <person name="Caboche M."/>
            <person name="Debast C."/>
            <person name="Gualberto J."/>
            <person name="Hoffmann B."/>
            <person name="Lecharny A."/>
            <person name="Le Ret M."/>
            <person name="Martin-Magniette M.-L."/>
            <person name="Mireau H."/>
            <person name="Peeters N."/>
            <person name="Renou J.-P."/>
            <person name="Szurek B."/>
            <person name="Taconnat L."/>
            <person name="Small I."/>
        </authorList>
    </citation>
    <scope>GENE FAMILY</scope>
</reference>
<gene>
    <name type="primary">EMB976</name>
    <name type="ordered locus">At5g27270</name>
    <name type="ORF">A_TM021B04.10</name>
    <name type="ORF">F21A20.6</name>
    <name type="ORF">T21B4.180</name>
</gene>
<evidence type="ECO:0000256" key="1">
    <source>
        <dbReference type="SAM" id="MobiDB-lite"/>
    </source>
</evidence>
<evidence type="ECO:0000305" key="2"/>